<gene>
    <name type="primary">LBD20</name>
    <name type="synonym">ASL21</name>
    <name type="ordered locus">At3g03760</name>
    <name type="ORF">F20H23.21</name>
</gene>
<protein>
    <recommendedName>
        <fullName>LOB domain-containing protein 20</fullName>
    </recommendedName>
    <alternativeName>
        <fullName>ASYMMETRIC LEAVES 2-like protein 21</fullName>
        <shortName>AS2-like protein 21</shortName>
    </alternativeName>
</protein>
<comment type="tissue specificity">
    <text evidence="3">Expressed in roots and flowers.</text>
</comment>
<comment type="similarity">
    <text evidence="4">Belongs to the LOB domain-containing protein family.</text>
</comment>
<evidence type="ECO:0000255" key="1">
    <source>
        <dbReference type="PROSITE-ProRule" id="PRU00291"/>
    </source>
</evidence>
<evidence type="ECO:0000256" key="2">
    <source>
        <dbReference type="SAM" id="MobiDB-lite"/>
    </source>
</evidence>
<evidence type="ECO:0000269" key="3">
    <source>
    </source>
</evidence>
<evidence type="ECO:0000305" key="4"/>
<name>LBD20_ARATH</name>
<proteinExistence type="evidence at transcript level"/>
<keyword id="KW-1185">Reference proteome</keyword>
<accession>Q9SRV3</accession>
<accession>B7XG75</accession>
<feature type="chain" id="PRO_0000132271" description="LOB domain-containing protein 20">
    <location>
        <begin position="1"/>
        <end position="273"/>
    </location>
</feature>
<feature type="domain" description="LOB" evidence="1">
    <location>
        <begin position="50"/>
        <end position="152"/>
    </location>
</feature>
<feature type="region of interest" description="Disordered" evidence="2">
    <location>
        <begin position="1"/>
        <end position="39"/>
    </location>
</feature>
<feature type="region of interest" description="Disordered" evidence="2">
    <location>
        <begin position="221"/>
        <end position="248"/>
    </location>
</feature>
<feature type="compositionally biased region" description="Basic and acidic residues" evidence="2">
    <location>
        <begin position="1"/>
        <end position="15"/>
    </location>
</feature>
<feature type="compositionally biased region" description="Low complexity" evidence="2">
    <location>
        <begin position="23"/>
        <end position="39"/>
    </location>
</feature>
<dbReference type="EMBL" id="AB473854">
    <property type="protein sequence ID" value="BAH10565.1"/>
    <property type="molecule type" value="mRNA"/>
</dbReference>
<dbReference type="EMBL" id="AC009540">
    <property type="protein sequence ID" value="AAF00641.1"/>
    <property type="molecule type" value="Genomic_DNA"/>
</dbReference>
<dbReference type="EMBL" id="CP002686">
    <property type="protein sequence ID" value="AEE73983.1"/>
    <property type="molecule type" value="Genomic_DNA"/>
</dbReference>
<dbReference type="EMBL" id="AK118291">
    <property type="protein sequence ID" value="BAC42909.1"/>
    <property type="molecule type" value="mRNA"/>
</dbReference>
<dbReference type="EMBL" id="BT008589">
    <property type="protein sequence ID" value="AAP40416.1"/>
    <property type="molecule type" value="mRNA"/>
</dbReference>
<dbReference type="RefSeq" id="NP_187026.1">
    <property type="nucleotide sequence ID" value="NM_111247.2"/>
</dbReference>
<dbReference type="SMR" id="Q9SRV3"/>
<dbReference type="STRING" id="3702.Q9SRV3"/>
<dbReference type="PaxDb" id="3702-AT3G03760.1"/>
<dbReference type="EnsemblPlants" id="AT3G03760.1">
    <property type="protein sequence ID" value="AT3G03760.1"/>
    <property type="gene ID" value="AT3G03760"/>
</dbReference>
<dbReference type="GeneID" id="821165"/>
<dbReference type="Gramene" id="AT3G03760.1">
    <property type="protein sequence ID" value="AT3G03760.1"/>
    <property type="gene ID" value="AT3G03760"/>
</dbReference>
<dbReference type="KEGG" id="ath:AT3G03760"/>
<dbReference type="Araport" id="AT3G03760"/>
<dbReference type="TAIR" id="AT3G03760">
    <property type="gene designation" value="LBD20"/>
</dbReference>
<dbReference type="eggNOG" id="ENOG502QQDN">
    <property type="taxonomic scope" value="Eukaryota"/>
</dbReference>
<dbReference type="HOGENOM" id="CLU_058353_3_3_1"/>
<dbReference type="InParanoid" id="Q9SRV3"/>
<dbReference type="OMA" id="QRGHNTS"/>
<dbReference type="PhylomeDB" id="Q9SRV3"/>
<dbReference type="PRO" id="PR:Q9SRV3"/>
<dbReference type="Proteomes" id="UP000006548">
    <property type="component" value="Chromosome 3"/>
</dbReference>
<dbReference type="ExpressionAtlas" id="Q9SRV3">
    <property type="expression patterns" value="baseline"/>
</dbReference>
<dbReference type="GO" id="GO:0009867">
    <property type="term" value="P:jasmonic acid mediated signaling pathway"/>
    <property type="evidence" value="ECO:0000315"/>
    <property type="project" value="TAIR"/>
</dbReference>
<dbReference type="GO" id="GO:1900150">
    <property type="term" value="P:regulation of defense response to fungus"/>
    <property type="evidence" value="ECO:0000315"/>
    <property type="project" value="TAIR"/>
</dbReference>
<dbReference type="GO" id="GO:0009753">
    <property type="term" value="P:response to jasmonic acid"/>
    <property type="evidence" value="ECO:0000270"/>
    <property type="project" value="TAIR"/>
</dbReference>
<dbReference type="InterPro" id="IPR004883">
    <property type="entry name" value="LOB"/>
</dbReference>
<dbReference type="InterPro" id="IPR017394">
    <property type="entry name" value="LOB_18/20"/>
</dbReference>
<dbReference type="PANTHER" id="PTHR31529">
    <property type="entry name" value="LOB DOMAIN CONTAINING PROTEIN"/>
    <property type="match status" value="1"/>
</dbReference>
<dbReference type="PANTHER" id="PTHR31529:SF12">
    <property type="entry name" value="LOB DOMAIN-CONTAINING PROTEIN 20"/>
    <property type="match status" value="1"/>
</dbReference>
<dbReference type="Pfam" id="PF03195">
    <property type="entry name" value="LOB"/>
    <property type="match status" value="1"/>
</dbReference>
<dbReference type="PIRSF" id="PIRSF038127">
    <property type="entry name" value="UCP038127_LOB"/>
    <property type="match status" value="1"/>
</dbReference>
<dbReference type="PROSITE" id="PS50891">
    <property type="entry name" value="LOB"/>
    <property type="match status" value="1"/>
</dbReference>
<reference key="1">
    <citation type="journal article" date="2009" name="Plant J.">
        <title>Characterization of genes in the ASYMMETRIC LEAVES2/LATERAL ORGAN BOUNDARIES (AS2/LOB) family in Arabidopsis thaliana, and functional and molecular comparisons between AS2 and other family members.</title>
        <authorList>
            <person name="Matsumura Y."/>
            <person name="Iwakawa H."/>
            <person name="Machida Y."/>
            <person name="Machida C."/>
        </authorList>
    </citation>
    <scope>NUCLEOTIDE SEQUENCE [MRNA]</scope>
    <source>
        <strain>cv. Columbia</strain>
    </source>
</reference>
<reference key="2">
    <citation type="journal article" date="2000" name="Nature">
        <title>Sequence and analysis of chromosome 3 of the plant Arabidopsis thaliana.</title>
        <authorList>
            <person name="Salanoubat M."/>
            <person name="Lemcke K."/>
            <person name="Rieger M."/>
            <person name="Ansorge W."/>
            <person name="Unseld M."/>
            <person name="Fartmann B."/>
            <person name="Valle G."/>
            <person name="Bloecker H."/>
            <person name="Perez-Alonso M."/>
            <person name="Obermaier B."/>
            <person name="Delseny M."/>
            <person name="Boutry M."/>
            <person name="Grivell L.A."/>
            <person name="Mache R."/>
            <person name="Puigdomenech P."/>
            <person name="De Simone V."/>
            <person name="Choisne N."/>
            <person name="Artiguenave F."/>
            <person name="Robert C."/>
            <person name="Brottier P."/>
            <person name="Wincker P."/>
            <person name="Cattolico L."/>
            <person name="Weissenbach J."/>
            <person name="Saurin W."/>
            <person name="Quetier F."/>
            <person name="Schaefer M."/>
            <person name="Mueller-Auer S."/>
            <person name="Gabel C."/>
            <person name="Fuchs M."/>
            <person name="Benes V."/>
            <person name="Wurmbach E."/>
            <person name="Drzonek H."/>
            <person name="Erfle H."/>
            <person name="Jordan N."/>
            <person name="Bangert S."/>
            <person name="Wiedelmann R."/>
            <person name="Kranz H."/>
            <person name="Voss H."/>
            <person name="Holland R."/>
            <person name="Brandt P."/>
            <person name="Nyakatura G."/>
            <person name="Vezzi A."/>
            <person name="D'Angelo M."/>
            <person name="Pallavicini A."/>
            <person name="Toppo S."/>
            <person name="Simionati B."/>
            <person name="Conrad A."/>
            <person name="Hornischer K."/>
            <person name="Kauer G."/>
            <person name="Loehnert T.-H."/>
            <person name="Nordsiek G."/>
            <person name="Reichelt J."/>
            <person name="Scharfe M."/>
            <person name="Schoen O."/>
            <person name="Bargues M."/>
            <person name="Terol J."/>
            <person name="Climent J."/>
            <person name="Navarro P."/>
            <person name="Collado C."/>
            <person name="Perez-Perez A."/>
            <person name="Ottenwaelder B."/>
            <person name="Duchemin D."/>
            <person name="Cooke R."/>
            <person name="Laudie M."/>
            <person name="Berger-Llauro C."/>
            <person name="Purnelle B."/>
            <person name="Masuy D."/>
            <person name="de Haan M."/>
            <person name="Maarse A.C."/>
            <person name="Alcaraz J.-P."/>
            <person name="Cottet A."/>
            <person name="Casacuberta E."/>
            <person name="Monfort A."/>
            <person name="Argiriou A."/>
            <person name="Flores M."/>
            <person name="Liguori R."/>
            <person name="Vitale D."/>
            <person name="Mannhaupt G."/>
            <person name="Haase D."/>
            <person name="Schoof H."/>
            <person name="Rudd S."/>
            <person name="Zaccaria P."/>
            <person name="Mewes H.-W."/>
            <person name="Mayer K.F.X."/>
            <person name="Kaul S."/>
            <person name="Town C.D."/>
            <person name="Koo H.L."/>
            <person name="Tallon L.J."/>
            <person name="Jenkins J."/>
            <person name="Rooney T."/>
            <person name="Rizzo M."/>
            <person name="Walts A."/>
            <person name="Utterback T."/>
            <person name="Fujii C.Y."/>
            <person name="Shea T.P."/>
            <person name="Creasy T.H."/>
            <person name="Haas B."/>
            <person name="Maiti R."/>
            <person name="Wu D."/>
            <person name="Peterson J."/>
            <person name="Van Aken S."/>
            <person name="Pai G."/>
            <person name="Militscher J."/>
            <person name="Sellers P."/>
            <person name="Gill J.E."/>
            <person name="Feldblyum T.V."/>
            <person name="Preuss D."/>
            <person name="Lin X."/>
            <person name="Nierman W.C."/>
            <person name="Salzberg S.L."/>
            <person name="White O."/>
            <person name="Venter J.C."/>
            <person name="Fraser C.M."/>
            <person name="Kaneko T."/>
            <person name="Nakamura Y."/>
            <person name="Sato S."/>
            <person name="Kato T."/>
            <person name="Asamizu E."/>
            <person name="Sasamoto S."/>
            <person name="Kimura T."/>
            <person name="Idesawa K."/>
            <person name="Kawashima K."/>
            <person name="Kishida Y."/>
            <person name="Kiyokawa C."/>
            <person name="Kohara M."/>
            <person name="Matsumoto M."/>
            <person name="Matsuno A."/>
            <person name="Muraki A."/>
            <person name="Nakayama S."/>
            <person name="Nakazaki N."/>
            <person name="Shinpo S."/>
            <person name="Takeuchi C."/>
            <person name="Wada T."/>
            <person name="Watanabe A."/>
            <person name="Yamada M."/>
            <person name="Yasuda M."/>
            <person name="Tabata S."/>
        </authorList>
    </citation>
    <scope>NUCLEOTIDE SEQUENCE [LARGE SCALE GENOMIC DNA]</scope>
    <source>
        <strain>cv. Columbia</strain>
    </source>
</reference>
<reference key="3">
    <citation type="journal article" date="2017" name="Plant J.">
        <title>Araport11: a complete reannotation of the Arabidopsis thaliana reference genome.</title>
        <authorList>
            <person name="Cheng C.Y."/>
            <person name="Krishnakumar V."/>
            <person name="Chan A.P."/>
            <person name="Thibaud-Nissen F."/>
            <person name="Schobel S."/>
            <person name="Town C.D."/>
        </authorList>
    </citation>
    <scope>GENOME REANNOTATION</scope>
    <source>
        <strain>cv. Columbia</strain>
    </source>
</reference>
<reference key="4">
    <citation type="journal article" date="2002" name="Science">
        <title>Functional annotation of a full-length Arabidopsis cDNA collection.</title>
        <authorList>
            <person name="Seki M."/>
            <person name="Narusaka M."/>
            <person name="Kamiya A."/>
            <person name="Ishida J."/>
            <person name="Satou M."/>
            <person name="Sakurai T."/>
            <person name="Nakajima M."/>
            <person name="Enju A."/>
            <person name="Akiyama K."/>
            <person name="Oono Y."/>
            <person name="Muramatsu M."/>
            <person name="Hayashizaki Y."/>
            <person name="Kawai J."/>
            <person name="Carninci P."/>
            <person name="Itoh M."/>
            <person name="Ishii Y."/>
            <person name="Arakawa T."/>
            <person name="Shibata K."/>
            <person name="Shinagawa A."/>
            <person name="Shinozaki K."/>
        </authorList>
    </citation>
    <scope>NUCLEOTIDE SEQUENCE [LARGE SCALE MRNA]</scope>
    <source>
        <strain>cv. Columbia</strain>
    </source>
</reference>
<reference key="5">
    <citation type="journal article" date="2003" name="Science">
        <title>Empirical analysis of transcriptional activity in the Arabidopsis genome.</title>
        <authorList>
            <person name="Yamada K."/>
            <person name="Lim J."/>
            <person name="Dale J.M."/>
            <person name="Chen H."/>
            <person name="Shinn P."/>
            <person name="Palm C.J."/>
            <person name="Southwick A.M."/>
            <person name="Wu H.C."/>
            <person name="Kim C.J."/>
            <person name="Nguyen M."/>
            <person name="Pham P.K."/>
            <person name="Cheuk R.F."/>
            <person name="Karlin-Newmann G."/>
            <person name="Liu S.X."/>
            <person name="Lam B."/>
            <person name="Sakano H."/>
            <person name="Wu T."/>
            <person name="Yu G."/>
            <person name="Miranda M."/>
            <person name="Quach H.L."/>
            <person name="Tripp M."/>
            <person name="Chang C.H."/>
            <person name="Lee J.M."/>
            <person name="Toriumi M.J."/>
            <person name="Chan M.M."/>
            <person name="Tang C.C."/>
            <person name="Onodera C.S."/>
            <person name="Deng J.M."/>
            <person name="Akiyama K."/>
            <person name="Ansari Y."/>
            <person name="Arakawa T."/>
            <person name="Banh J."/>
            <person name="Banno F."/>
            <person name="Bowser L."/>
            <person name="Brooks S.Y."/>
            <person name="Carninci P."/>
            <person name="Chao Q."/>
            <person name="Choy N."/>
            <person name="Enju A."/>
            <person name="Goldsmith A.D."/>
            <person name="Gurjal M."/>
            <person name="Hansen N.F."/>
            <person name="Hayashizaki Y."/>
            <person name="Johnson-Hopson C."/>
            <person name="Hsuan V.W."/>
            <person name="Iida K."/>
            <person name="Karnes M."/>
            <person name="Khan S."/>
            <person name="Koesema E."/>
            <person name="Ishida J."/>
            <person name="Jiang P.X."/>
            <person name="Jones T."/>
            <person name="Kawai J."/>
            <person name="Kamiya A."/>
            <person name="Meyers C."/>
            <person name="Nakajima M."/>
            <person name="Narusaka M."/>
            <person name="Seki M."/>
            <person name="Sakurai T."/>
            <person name="Satou M."/>
            <person name="Tamse R."/>
            <person name="Vaysberg M."/>
            <person name="Wallender E.K."/>
            <person name="Wong C."/>
            <person name="Yamamura Y."/>
            <person name="Yuan S."/>
            <person name="Shinozaki K."/>
            <person name="Davis R.W."/>
            <person name="Theologis A."/>
            <person name="Ecker J.R."/>
        </authorList>
    </citation>
    <scope>NUCLEOTIDE SEQUENCE [LARGE SCALE MRNA]</scope>
    <source>
        <strain>cv. Columbia</strain>
    </source>
</reference>
<reference key="6">
    <citation type="journal article" date="2002" name="Plant Physiol.">
        <title>The LATERAL ORGAN BOUNDARIES gene defines a novel, plant-specific gene family.</title>
        <authorList>
            <person name="Shuai B."/>
            <person name="Reynaga-Pena C.G."/>
            <person name="Springer P.S."/>
        </authorList>
    </citation>
    <scope>TISSUE SPECIFICITY</scope>
    <scope>GENE FAMILY</scope>
    <scope>NOMENCLATURE</scope>
</reference>
<reference key="7">
    <citation type="journal article" date="2002" name="Plant Cell Physiol.">
        <title>The ASYMMETRIC LEAVES2 gene of Arabidopsis thaliana, required for formation of a symmetric flat leaf lamina, encodes a member of a novel family of proteins characterized by cysteine repeats and a leucine zipper.</title>
        <authorList>
            <person name="Iwakawa H."/>
            <person name="Ueno Y."/>
            <person name="Semiarti E."/>
            <person name="Onouchi H."/>
            <person name="Kojima S."/>
            <person name="Tsukaya H."/>
            <person name="Hasebe M."/>
            <person name="Soma T."/>
            <person name="Ikezaki M."/>
            <person name="Machida C."/>
            <person name="Machida Y."/>
        </authorList>
    </citation>
    <scope>GENE FAMILY</scope>
    <scope>NOMENCLATURE</scope>
</reference>
<sequence>MADQQRGHNTSDSRRKSLAGKRTSQQTPTSSLSSGGVSMAAATTGTGTASPCGACKFLRRKCVSGCIFAPHFGSDQGAARFAAVHKVFGASNVSKLLHHIPVNRRHDAVVTISYEAQARLSDPVYGCVSTILALQQQVASLQAELSVVQSQLINSRVAMANVMQQQTHHQQQQQQLVVMQQPEYSNNSSASTTLAGAAMNSFTMTADAAAVSYDVMAPTNLEHSLQPMPPHQQRRGDYQHEDEEESGADFSVAVGSTAVASKVIFPAEDFHRR</sequence>
<organism>
    <name type="scientific">Arabidopsis thaliana</name>
    <name type="common">Mouse-ear cress</name>
    <dbReference type="NCBI Taxonomy" id="3702"/>
    <lineage>
        <taxon>Eukaryota</taxon>
        <taxon>Viridiplantae</taxon>
        <taxon>Streptophyta</taxon>
        <taxon>Embryophyta</taxon>
        <taxon>Tracheophyta</taxon>
        <taxon>Spermatophyta</taxon>
        <taxon>Magnoliopsida</taxon>
        <taxon>eudicotyledons</taxon>
        <taxon>Gunneridae</taxon>
        <taxon>Pentapetalae</taxon>
        <taxon>rosids</taxon>
        <taxon>malvids</taxon>
        <taxon>Brassicales</taxon>
        <taxon>Brassicaceae</taxon>
        <taxon>Camelineae</taxon>
        <taxon>Arabidopsis</taxon>
    </lineage>
</organism>